<accession>A8ERP6</accession>
<organism>
    <name type="scientific">Aliarcobacter butzleri (strain RM4018)</name>
    <name type="common">Arcobacter butzleri</name>
    <dbReference type="NCBI Taxonomy" id="367737"/>
    <lineage>
        <taxon>Bacteria</taxon>
        <taxon>Pseudomonadati</taxon>
        <taxon>Campylobacterota</taxon>
        <taxon>Epsilonproteobacteria</taxon>
        <taxon>Campylobacterales</taxon>
        <taxon>Arcobacteraceae</taxon>
        <taxon>Aliarcobacter</taxon>
    </lineage>
</organism>
<evidence type="ECO:0000255" key="1">
    <source>
        <dbReference type="HAMAP-Rule" id="MF_00176"/>
    </source>
</evidence>
<reference key="1">
    <citation type="journal article" date="2007" name="PLoS ONE">
        <title>The complete genome sequence and analysis of the Epsilonproteobacterium Arcobacter butzleri.</title>
        <authorList>
            <person name="Miller W.G."/>
            <person name="Parker C.T."/>
            <person name="Rubenfield M."/>
            <person name="Mendz G.L."/>
            <person name="Woesten M.M.S.M."/>
            <person name="Ussery D.W."/>
            <person name="Stolz J.F."/>
            <person name="Binnewies T.T."/>
            <person name="Hallin P.F."/>
            <person name="Wang G."/>
            <person name="Malek J.A."/>
            <person name="Rogosin A."/>
            <person name="Stanker L.H."/>
            <person name="Mandrell R.E."/>
        </authorList>
    </citation>
    <scope>NUCLEOTIDE SEQUENCE [LARGE SCALE GENOMIC DNA]</scope>
    <source>
        <strain>RM4018</strain>
    </source>
</reference>
<name>SYS_ALIB4</name>
<proteinExistence type="inferred from homology"/>
<protein>
    <recommendedName>
        <fullName evidence="1">Serine--tRNA ligase</fullName>
        <ecNumber evidence="1">6.1.1.11</ecNumber>
    </recommendedName>
    <alternativeName>
        <fullName evidence="1">Seryl-tRNA synthetase</fullName>
        <shortName evidence="1">SerRS</shortName>
    </alternativeName>
    <alternativeName>
        <fullName evidence="1">Seryl-tRNA(Ser/Sec) synthetase</fullName>
    </alternativeName>
</protein>
<feature type="chain" id="PRO_1000058349" description="Serine--tRNA ligase">
    <location>
        <begin position="1"/>
        <end position="412"/>
    </location>
</feature>
<feature type="binding site" evidence="1">
    <location>
        <begin position="228"/>
        <end position="230"/>
    </location>
    <ligand>
        <name>L-serine</name>
        <dbReference type="ChEBI" id="CHEBI:33384"/>
    </ligand>
</feature>
<feature type="binding site" evidence="1">
    <location>
        <begin position="259"/>
        <end position="261"/>
    </location>
    <ligand>
        <name>ATP</name>
        <dbReference type="ChEBI" id="CHEBI:30616"/>
    </ligand>
</feature>
<feature type="binding site" evidence="1">
    <location>
        <position position="282"/>
    </location>
    <ligand>
        <name>L-serine</name>
        <dbReference type="ChEBI" id="CHEBI:33384"/>
    </ligand>
</feature>
<feature type="binding site" evidence="1">
    <location>
        <begin position="346"/>
        <end position="349"/>
    </location>
    <ligand>
        <name>ATP</name>
        <dbReference type="ChEBI" id="CHEBI:30616"/>
    </ligand>
</feature>
<feature type="binding site" evidence="1">
    <location>
        <position position="380"/>
    </location>
    <ligand>
        <name>L-serine</name>
        <dbReference type="ChEBI" id="CHEBI:33384"/>
    </ligand>
</feature>
<dbReference type="EC" id="6.1.1.11" evidence="1"/>
<dbReference type="EMBL" id="CP000361">
    <property type="protein sequence ID" value="ABV66620.1"/>
    <property type="molecule type" value="Genomic_DNA"/>
</dbReference>
<dbReference type="RefSeq" id="WP_012012179.1">
    <property type="nucleotide sequence ID" value="NC_009850.1"/>
</dbReference>
<dbReference type="SMR" id="A8ERP6"/>
<dbReference type="STRING" id="367737.Abu_0345"/>
<dbReference type="GeneID" id="24303600"/>
<dbReference type="KEGG" id="abu:Abu_0345"/>
<dbReference type="eggNOG" id="COG0172">
    <property type="taxonomic scope" value="Bacteria"/>
</dbReference>
<dbReference type="HOGENOM" id="CLU_023797_1_1_7"/>
<dbReference type="UniPathway" id="UPA00906">
    <property type="reaction ID" value="UER00895"/>
</dbReference>
<dbReference type="Proteomes" id="UP000001136">
    <property type="component" value="Chromosome"/>
</dbReference>
<dbReference type="GO" id="GO:0005737">
    <property type="term" value="C:cytoplasm"/>
    <property type="evidence" value="ECO:0007669"/>
    <property type="project" value="UniProtKB-SubCell"/>
</dbReference>
<dbReference type="GO" id="GO:0005524">
    <property type="term" value="F:ATP binding"/>
    <property type="evidence" value="ECO:0007669"/>
    <property type="project" value="UniProtKB-UniRule"/>
</dbReference>
<dbReference type="GO" id="GO:0004828">
    <property type="term" value="F:serine-tRNA ligase activity"/>
    <property type="evidence" value="ECO:0007669"/>
    <property type="project" value="UniProtKB-UniRule"/>
</dbReference>
<dbReference type="GO" id="GO:0016260">
    <property type="term" value="P:selenocysteine biosynthetic process"/>
    <property type="evidence" value="ECO:0007669"/>
    <property type="project" value="UniProtKB-UniRule"/>
</dbReference>
<dbReference type="GO" id="GO:0006434">
    <property type="term" value="P:seryl-tRNA aminoacylation"/>
    <property type="evidence" value="ECO:0007669"/>
    <property type="project" value="UniProtKB-UniRule"/>
</dbReference>
<dbReference type="CDD" id="cd00770">
    <property type="entry name" value="SerRS_core"/>
    <property type="match status" value="1"/>
</dbReference>
<dbReference type="Gene3D" id="3.30.930.10">
    <property type="entry name" value="Bira Bifunctional Protein, Domain 2"/>
    <property type="match status" value="1"/>
</dbReference>
<dbReference type="Gene3D" id="1.10.287.40">
    <property type="entry name" value="Serine-tRNA synthetase, tRNA binding domain"/>
    <property type="match status" value="1"/>
</dbReference>
<dbReference type="HAMAP" id="MF_00176">
    <property type="entry name" value="Ser_tRNA_synth_type1"/>
    <property type="match status" value="1"/>
</dbReference>
<dbReference type="InterPro" id="IPR002314">
    <property type="entry name" value="aa-tRNA-synt_IIb"/>
</dbReference>
<dbReference type="InterPro" id="IPR006195">
    <property type="entry name" value="aa-tRNA-synth_II"/>
</dbReference>
<dbReference type="InterPro" id="IPR045864">
    <property type="entry name" value="aa-tRNA-synth_II/BPL/LPL"/>
</dbReference>
<dbReference type="InterPro" id="IPR002317">
    <property type="entry name" value="Ser-tRNA-ligase_type_1"/>
</dbReference>
<dbReference type="InterPro" id="IPR015866">
    <property type="entry name" value="Ser-tRNA-synth_1_N"/>
</dbReference>
<dbReference type="InterPro" id="IPR042103">
    <property type="entry name" value="SerRS_1_N_sf"/>
</dbReference>
<dbReference type="InterPro" id="IPR033729">
    <property type="entry name" value="SerRS_core"/>
</dbReference>
<dbReference type="InterPro" id="IPR010978">
    <property type="entry name" value="tRNA-bd_arm"/>
</dbReference>
<dbReference type="NCBIfam" id="TIGR00414">
    <property type="entry name" value="serS"/>
    <property type="match status" value="1"/>
</dbReference>
<dbReference type="PANTHER" id="PTHR43697:SF1">
    <property type="entry name" value="SERINE--TRNA LIGASE"/>
    <property type="match status" value="1"/>
</dbReference>
<dbReference type="PANTHER" id="PTHR43697">
    <property type="entry name" value="SERYL-TRNA SYNTHETASE"/>
    <property type="match status" value="1"/>
</dbReference>
<dbReference type="Pfam" id="PF02403">
    <property type="entry name" value="Seryl_tRNA_N"/>
    <property type="match status" value="1"/>
</dbReference>
<dbReference type="Pfam" id="PF00587">
    <property type="entry name" value="tRNA-synt_2b"/>
    <property type="match status" value="1"/>
</dbReference>
<dbReference type="PIRSF" id="PIRSF001529">
    <property type="entry name" value="Ser-tRNA-synth_IIa"/>
    <property type="match status" value="1"/>
</dbReference>
<dbReference type="PRINTS" id="PR00981">
    <property type="entry name" value="TRNASYNTHSER"/>
</dbReference>
<dbReference type="SUPFAM" id="SSF55681">
    <property type="entry name" value="Class II aaRS and biotin synthetases"/>
    <property type="match status" value="1"/>
</dbReference>
<dbReference type="SUPFAM" id="SSF46589">
    <property type="entry name" value="tRNA-binding arm"/>
    <property type="match status" value="1"/>
</dbReference>
<dbReference type="PROSITE" id="PS50862">
    <property type="entry name" value="AA_TRNA_LIGASE_II"/>
    <property type="match status" value="1"/>
</dbReference>
<keyword id="KW-0030">Aminoacyl-tRNA synthetase</keyword>
<keyword id="KW-0067">ATP-binding</keyword>
<keyword id="KW-0963">Cytoplasm</keyword>
<keyword id="KW-0436">Ligase</keyword>
<keyword id="KW-0547">Nucleotide-binding</keyword>
<keyword id="KW-0648">Protein biosynthesis</keyword>
<keyword id="KW-1185">Reference proteome</keyword>
<comment type="function">
    <text evidence="1">Catalyzes the attachment of serine to tRNA(Ser). Is also able to aminoacylate tRNA(Sec) with serine, to form the misacylated tRNA L-seryl-tRNA(Sec), which will be further converted into selenocysteinyl-tRNA(Sec).</text>
</comment>
<comment type="catalytic activity">
    <reaction evidence="1">
        <text>tRNA(Ser) + L-serine + ATP = L-seryl-tRNA(Ser) + AMP + diphosphate + H(+)</text>
        <dbReference type="Rhea" id="RHEA:12292"/>
        <dbReference type="Rhea" id="RHEA-COMP:9669"/>
        <dbReference type="Rhea" id="RHEA-COMP:9703"/>
        <dbReference type="ChEBI" id="CHEBI:15378"/>
        <dbReference type="ChEBI" id="CHEBI:30616"/>
        <dbReference type="ChEBI" id="CHEBI:33019"/>
        <dbReference type="ChEBI" id="CHEBI:33384"/>
        <dbReference type="ChEBI" id="CHEBI:78442"/>
        <dbReference type="ChEBI" id="CHEBI:78533"/>
        <dbReference type="ChEBI" id="CHEBI:456215"/>
        <dbReference type="EC" id="6.1.1.11"/>
    </reaction>
</comment>
<comment type="catalytic activity">
    <reaction evidence="1">
        <text>tRNA(Sec) + L-serine + ATP = L-seryl-tRNA(Sec) + AMP + diphosphate + H(+)</text>
        <dbReference type="Rhea" id="RHEA:42580"/>
        <dbReference type="Rhea" id="RHEA-COMP:9742"/>
        <dbReference type="Rhea" id="RHEA-COMP:10128"/>
        <dbReference type="ChEBI" id="CHEBI:15378"/>
        <dbReference type="ChEBI" id="CHEBI:30616"/>
        <dbReference type="ChEBI" id="CHEBI:33019"/>
        <dbReference type="ChEBI" id="CHEBI:33384"/>
        <dbReference type="ChEBI" id="CHEBI:78442"/>
        <dbReference type="ChEBI" id="CHEBI:78533"/>
        <dbReference type="ChEBI" id="CHEBI:456215"/>
        <dbReference type="EC" id="6.1.1.11"/>
    </reaction>
</comment>
<comment type="pathway">
    <text evidence="1">Aminoacyl-tRNA biosynthesis; selenocysteinyl-tRNA(Sec) biosynthesis; L-seryl-tRNA(Sec) from L-serine and tRNA(Sec): step 1/1.</text>
</comment>
<comment type="subunit">
    <text evidence="1">Homodimer. The tRNA molecule binds across the dimer.</text>
</comment>
<comment type="subcellular location">
    <subcellularLocation>
        <location evidence="1">Cytoplasm</location>
    </subcellularLocation>
</comment>
<comment type="domain">
    <text evidence="1">Consists of two distinct domains, a catalytic core and a N-terminal extension that is involved in tRNA binding.</text>
</comment>
<comment type="similarity">
    <text evidence="1">Belongs to the class-II aminoacyl-tRNA synthetase family. Type-1 seryl-tRNA synthetase subfamily.</text>
</comment>
<sequence length="412" mass="46990">MIDIKLLQKDFDYVVKALQKKGVDNALLNNLKDLALKTKQKRQEMEDVTAEQNLLSKEFGRYKKENLDISELQEKINALKTKKQELEDEVRTLEDDLNSIILSVPNMPDENVPFGVDENENVILEVIGEKPTFNFTPKEHWDLSCDWLDFERGVKLAKSRFTAIKGDGARLERALINYMLDFNRQRGFNEWYVPFMANSNTLQGTGQLPKFADDLFKIEGEDLYLIPTAEVSLTNLYNDEIIDKSELPLLLTSYTPCFRKEAGSAGRDTRGLIRQHQFDKVEMVAITSQEQSDEIFEKMVNCASDLLSSLGLCHQKVQLCSGDLGFSAAVTIDLEVWLPGQNKFREISSISNTRDFQARRAKIRYKEDKKNILAHTLNGSSLAVGRTLLAIMENYQQADGSVKIPEVLKKYL</sequence>
<gene>
    <name evidence="1" type="primary">serS</name>
    <name type="ordered locus">Abu_0345</name>
</gene>